<comment type="function">
    <text evidence="1 2 3 4 5 6 7 8">Has a role in the RNA interference (RNAi) pathway which is important for heterochromatin formation, accurate chromosome segregation, centromere cohesion and telomere function during mitosis and meiosis. Required for both post-transcriptional and transcriptional gene silencing. Required for silencing at the centromeres and for initiation of transcriptionally silent heterochromatin at the mating type locus. Promotes histone H3 'Lys-10' methylation necessary for centromere function. Required for recruitment of swi6 and cohesin to an ectopic dg repeat. A member of the RNA-directed RNA polymerase complex (RDRC) which is involved in the generation of small interfering RNAs (siRNAs) and mediates their association with the RNA-induced transcriptional silencing (RITS) complex. RITS acts as a priming complex for dsRNA synthesis at the site of non-coding centromeric RNA. Its RNA-dependent RNA polymerase activity is critical in siRNA production necessary for heterochromatin formation.</text>
</comment>
<comment type="catalytic activity">
    <reaction>
        <text>RNA(n) + a ribonucleoside 5'-triphosphate = RNA(n+1) + diphosphate</text>
        <dbReference type="Rhea" id="RHEA:21248"/>
        <dbReference type="Rhea" id="RHEA-COMP:14527"/>
        <dbReference type="Rhea" id="RHEA-COMP:17342"/>
        <dbReference type="ChEBI" id="CHEBI:33019"/>
        <dbReference type="ChEBI" id="CHEBI:61557"/>
        <dbReference type="ChEBI" id="CHEBI:140395"/>
        <dbReference type="EC" id="2.7.7.48"/>
    </reaction>
</comment>
<comment type="subunit">
    <text>Cid12, hrr1 and rdp1 interact forming the RNA-directed RNA polymerase complex (RDRC). The RDRC complex interacts with the RITS complex via interaction between ago1 and hrr1. Clr4 has a role in mediating this interaction.</text>
</comment>
<comment type="subcellular location">
    <subcellularLocation>
        <location evidence="7">Cytoplasm</location>
    </subcellularLocation>
    <subcellularLocation>
        <location evidence="1 7">Nucleus</location>
    </subcellularLocation>
    <subcellularLocation>
        <location evidence="8">Chromosome</location>
        <location evidence="8">Telomere</location>
    </subcellularLocation>
    <subcellularLocation>
        <location evidence="8">Chromosome</location>
        <location evidence="8">Centromere</location>
    </subcellularLocation>
    <text evidence="8">Associates with telomeric and mating-type region heterochromatin.</text>
</comment>
<comment type="similarity">
    <text evidence="9">Belongs to the RdRP family.</text>
</comment>
<organism>
    <name type="scientific">Schizosaccharomyces pombe (strain 972 / ATCC 24843)</name>
    <name type="common">Fission yeast</name>
    <dbReference type="NCBI Taxonomy" id="284812"/>
    <lineage>
        <taxon>Eukaryota</taxon>
        <taxon>Fungi</taxon>
        <taxon>Dikarya</taxon>
        <taxon>Ascomycota</taxon>
        <taxon>Taphrinomycotina</taxon>
        <taxon>Schizosaccharomycetes</taxon>
        <taxon>Schizosaccharomycetales</taxon>
        <taxon>Schizosaccharomycetaceae</taxon>
        <taxon>Schizosaccharomyces</taxon>
    </lineage>
</organism>
<dbReference type="EC" id="2.7.7.48"/>
<dbReference type="EMBL" id="CU329670">
    <property type="protein sequence ID" value="CAB11093.1"/>
    <property type="molecule type" value="Genomic_DNA"/>
</dbReference>
<dbReference type="PIR" id="T11660">
    <property type="entry name" value="T11660"/>
</dbReference>
<dbReference type="RefSeq" id="NP_593295.1">
    <property type="nucleotide sequence ID" value="NM_001018725.2"/>
</dbReference>
<dbReference type="SMR" id="O14227"/>
<dbReference type="BioGRID" id="278673">
    <property type="interactions" value="85"/>
</dbReference>
<dbReference type="ComplexPortal" id="CPX-25780">
    <property type="entry name" value="RNA-directed RNA polymerase complex"/>
</dbReference>
<dbReference type="DIP" id="DIP-57038N"/>
<dbReference type="FunCoup" id="O14227">
    <property type="interactions" value="5"/>
</dbReference>
<dbReference type="IntAct" id="O14227">
    <property type="interactions" value="2"/>
</dbReference>
<dbReference type="STRING" id="284812.O14227"/>
<dbReference type="iPTMnet" id="O14227"/>
<dbReference type="PaxDb" id="4896-SPAC6F12.09.1"/>
<dbReference type="EnsemblFungi" id="SPAC6F12.09.1">
    <property type="protein sequence ID" value="SPAC6F12.09.1:pep"/>
    <property type="gene ID" value="SPAC6F12.09"/>
</dbReference>
<dbReference type="PomBase" id="SPAC6F12.09">
    <property type="gene designation" value="rdp1"/>
</dbReference>
<dbReference type="VEuPathDB" id="FungiDB:SPAC6F12.09"/>
<dbReference type="eggNOG" id="KOG0988">
    <property type="taxonomic scope" value="Eukaryota"/>
</dbReference>
<dbReference type="HOGENOM" id="CLU_001366_0_0_1"/>
<dbReference type="InParanoid" id="O14227"/>
<dbReference type="OMA" id="WKAWAHD"/>
<dbReference type="PhylomeDB" id="O14227"/>
<dbReference type="BRENDA" id="2.7.7.48">
    <property type="organism ID" value="5613"/>
</dbReference>
<dbReference type="PRO" id="PR:O14227"/>
<dbReference type="Proteomes" id="UP000002485">
    <property type="component" value="Chromosome I"/>
</dbReference>
<dbReference type="GO" id="GO:0000785">
    <property type="term" value="C:chromatin"/>
    <property type="evidence" value="ECO:0000314"/>
    <property type="project" value="PomBase"/>
</dbReference>
<dbReference type="GO" id="GO:0099115">
    <property type="term" value="C:chromosome, subtelomeric region"/>
    <property type="evidence" value="ECO:0000314"/>
    <property type="project" value="PomBase"/>
</dbReference>
<dbReference type="GO" id="GO:0005737">
    <property type="term" value="C:cytoplasm"/>
    <property type="evidence" value="ECO:0000314"/>
    <property type="project" value="PomBase"/>
</dbReference>
<dbReference type="GO" id="GO:0005829">
    <property type="term" value="C:cytosol"/>
    <property type="evidence" value="ECO:0007005"/>
    <property type="project" value="PomBase"/>
</dbReference>
<dbReference type="GO" id="GO:0031934">
    <property type="term" value="C:mating-type region heterochromatin"/>
    <property type="evidence" value="ECO:0000314"/>
    <property type="project" value="PomBase"/>
</dbReference>
<dbReference type="GO" id="GO:0031380">
    <property type="term" value="C:nuclear RNA-directed RNA polymerase complex"/>
    <property type="evidence" value="ECO:0000314"/>
    <property type="project" value="PomBase"/>
</dbReference>
<dbReference type="GO" id="GO:0005634">
    <property type="term" value="C:nucleus"/>
    <property type="evidence" value="ECO:0000314"/>
    <property type="project" value="PomBase"/>
</dbReference>
<dbReference type="GO" id="GO:0005721">
    <property type="term" value="C:pericentric heterochromatin"/>
    <property type="evidence" value="ECO:0000314"/>
    <property type="project" value="PomBase"/>
</dbReference>
<dbReference type="GO" id="GO:0140720">
    <property type="term" value="C:subtelomeric heterochromatin"/>
    <property type="evidence" value="ECO:0000314"/>
    <property type="project" value="PomBase"/>
</dbReference>
<dbReference type="GO" id="GO:0003723">
    <property type="term" value="F:RNA binding"/>
    <property type="evidence" value="ECO:0007669"/>
    <property type="project" value="UniProtKB-KW"/>
</dbReference>
<dbReference type="GO" id="GO:0003968">
    <property type="term" value="F:RNA-directed RNA polymerase activity"/>
    <property type="evidence" value="ECO:0000314"/>
    <property type="project" value="PomBase"/>
</dbReference>
<dbReference type="GO" id="GO:0007059">
    <property type="term" value="P:chromosome segregation"/>
    <property type="evidence" value="ECO:0007669"/>
    <property type="project" value="UniProtKB-KW"/>
</dbReference>
<dbReference type="GO" id="GO:0033562">
    <property type="term" value="P:co-transcriptional gene silencing by RNA interference machinery"/>
    <property type="evidence" value="ECO:0000315"/>
    <property type="project" value="PomBase"/>
</dbReference>
<dbReference type="GO" id="GO:0070317">
    <property type="term" value="P:negative regulation of G0 to G1 transition"/>
    <property type="evidence" value="ECO:0000315"/>
    <property type="project" value="PomBase"/>
</dbReference>
<dbReference type="GO" id="GO:0031048">
    <property type="term" value="P:regulatory ncRNA-mediated heterochromatin formation"/>
    <property type="evidence" value="ECO:0000315"/>
    <property type="project" value="PomBase"/>
</dbReference>
<dbReference type="GO" id="GO:0030466">
    <property type="term" value="P:silent mating-type cassette heterochromatin formation"/>
    <property type="evidence" value="ECO:0000315"/>
    <property type="project" value="PomBase"/>
</dbReference>
<dbReference type="GO" id="GO:0030422">
    <property type="term" value="P:siRNA processing"/>
    <property type="evidence" value="ECO:0000318"/>
    <property type="project" value="GO_Central"/>
</dbReference>
<dbReference type="GO" id="GO:0140727">
    <property type="term" value="P:siRNA-mediated pericentric heterochromatin formation"/>
    <property type="evidence" value="ECO:0000314"/>
    <property type="project" value="PomBase"/>
</dbReference>
<dbReference type="InterPro" id="IPR007855">
    <property type="entry name" value="RNA-dep_RNA_pol_euk-typ"/>
</dbReference>
<dbReference type="PANTHER" id="PTHR23079">
    <property type="entry name" value="RNA-DEPENDENT RNA POLYMERASE"/>
    <property type="match status" value="1"/>
</dbReference>
<dbReference type="PANTHER" id="PTHR23079:SF55">
    <property type="entry name" value="RNA-DIRECTED RNA POLYMERASE"/>
    <property type="match status" value="1"/>
</dbReference>
<dbReference type="Pfam" id="PF05183">
    <property type="entry name" value="RdRP"/>
    <property type="match status" value="1"/>
</dbReference>
<sequence>MAVSLNDFISVKLKRYSRESPWERLRVPYRNKKQKKWASVHNNEAQLHSANKRNDNCLIQRSSTWRLGDMITLVIKDIPVTWLSNEGGKLYNLWEPLHDYGTIEFMKINEPLNGQTSTTAIVQFAPPPKVPFWEPNGKINVKGVDLAVQIDITAHRSHISRQVFSKNSFRSDQLVKIPLSSFKLGQVYDERIVPLFGVDCGITVTESNLLVYFNFKKLCVLFDASFDKQIETFRLDFDFHSIIGDVGTDYYDDHISLVFRFRFSPLIFRKSKNATESRVQTFWTASHLWRRHYDILPFNVSPTTASPIELLNCHNAPIGRCNVLVLSFSIRDESDKDDIAFLLHNLEKFNLKSQLDKVVFHLVPDYKHRCSLINDKEIEEEIAYLLQACLSKNLLSEIDLPIILANLKKLSKERAKKFLRLILTSKTALINPSELDFTKSFVFYDLSSASSIHIKKLYVTPTTLRIVEDSLEAGNRVIRNFKDFANRFMRVQITDEYYKQKIRGGSDGFRNEKLYSRIQQLLTYGIKVGNQIYEFLAFGNSQLREHGAYFFASGSDLNAKQIREWMGDFSEINSVSKYAARMGQCFSTTKEINRFCVDISLQDDIVRNNHCFTDGVGMASLSVIRRLSLEVKNHDMFPSAFQFRMGGYKGVLSLAPPTKLEYHQGNLVFPRRSQDKFKSFHSTLEVIKISRFSNAHLNMQLITLLEGLGVEKTVFLELTRSQLSKMNESINSKQKSILMLRDNVDEYHSTLIIADFIQAGFLERDDAFTENLLNLYYEWVLRLIKEKQKVSVPKGAYLLGVADETGTLKGHYDDAVLSVPEIFIQITDTSTSFGSYSTGKLKTRVIVGLCIVARNPSLHPGDVRVCKAVRCDELMHLKNVIVFPTTGDRSIPAMCSGGDLDGDEYTVIWDQRLLPKIVNYPPLLESSPKKSIDFLEGKPLIDSVKEFFVNYIKYDSLGLISNAWKAWAHDHDNNPEGIFGNVCLELAEMHSKAVDFAKSGVACKMQAKYHPKRYPDFMQKTKTRSFRSETAVGKIFRYAARFQRESGRPATYNPIMNTVYDPCMKLPRFKTEYLNVAEEVKKHYDNDLRSIMARFDISTEYEVYTAFILFKDDLAKTVNEYGLREEVSFQFDLLKKKYTQEYLEKCALSNQSAFDSSEYEERINSAVAATYDVTYDQRVKSVGNGTTEVLISFPYLFSSRLCQLSRKAMLTANNF</sequence>
<keyword id="KW-0137">Centromere</keyword>
<keyword id="KW-0158">Chromosome</keyword>
<keyword id="KW-0159">Chromosome partition</keyword>
<keyword id="KW-0963">Cytoplasm</keyword>
<keyword id="KW-0548">Nucleotidyltransferase</keyword>
<keyword id="KW-0539">Nucleus</keyword>
<keyword id="KW-1185">Reference proteome</keyword>
<keyword id="KW-0694">RNA-binding</keyword>
<keyword id="KW-0696">RNA-directed RNA polymerase</keyword>
<keyword id="KW-0943">RNA-mediated gene silencing</keyword>
<keyword id="KW-0779">Telomere</keyword>
<keyword id="KW-0808">Transferase</keyword>
<reference key="1">
    <citation type="journal article" date="2002" name="Nature">
        <title>The genome sequence of Schizosaccharomyces pombe.</title>
        <authorList>
            <person name="Wood V."/>
            <person name="Gwilliam R."/>
            <person name="Rajandream M.A."/>
            <person name="Lyne M.H."/>
            <person name="Lyne R."/>
            <person name="Stewart A."/>
            <person name="Sgouros J.G."/>
            <person name="Peat N."/>
            <person name="Hayles J."/>
            <person name="Baker S.G."/>
            <person name="Basham D."/>
            <person name="Bowman S."/>
            <person name="Brooks K."/>
            <person name="Brown D."/>
            <person name="Brown S."/>
            <person name="Chillingworth T."/>
            <person name="Churcher C.M."/>
            <person name="Collins M."/>
            <person name="Connor R."/>
            <person name="Cronin A."/>
            <person name="Davis P."/>
            <person name="Feltwell T."/>
            <person name="Fraser A."/>
            <person name="Gentles S."/>
            <person name="Goble A."/>
            <person name="Hamlin N."/>
            <person name="Harris D.E."/>
            <person name="Hidalgo J."/>
            <person name="Hodgson G."/>
            <person name="Holroyd S."/>
            <person name="Hornsby T."/>
            <person name="Howarth S."/>
            <person name="Huckle E.J."/>
            <person name="Hunt S."/>
            <person name="Jagels K."/>
            <person name="James K.D."/>
            <person name="Jones L."/>
            <person name="Jones M."/>
            <person name="Leather S."/>
            <person name="McDonald S."/>
            <person name="McLean J."/>
            <person name="Mooney P."/>
            <person name="Moule S."/>
            <person name="Mungall K.L."/>
            <person name="Murphy L.D."/>
            <person name="Niblett D."/>
            <person name="Odell C."/>
            <person name="Oliver K."/>
            <person name="O'Neil S."/>
            <person name="Pearson D."/>
            <person name="Quail M.A."/>
            <person name="Rabbinowitsch E."/>
            <person name="Rutherford K.M."/>
            <person name="Rutter S."/>
            <person name="Saunders D."/>
            <person name="Seeger K."/>
            <person name="Sharp S."/>
            <person name="Skelton J."/>
            <person name="Simmonds M.N."/>
            <person name="Squares R."/>
            <person name="Squares S."/>
            <person name="Stevens K."/>
            <person name="Taylor K."/>
            <person name="Taylor R.G."/>
            <person name="Tivey A."/>
            <person name="Walsh S.V."/>
            <person name="Warren T."/>
            <person name="Whitehead S."/>
            <person name="Woodward J.R."/>
            <person name="Volckaert G."/>
            <person name="Aert R."/>
            <person name="Robben J."/>
            <person name="Grymonprez B."/>
            <person name="Weltjens I."/>
            <person name="Vanstreels E."/>
            <person name="Rieger M."/>
            <person name="Schaefer M."/>
            <person name="Mueller-Auer S."/>
            <person name="Gabel C."/>
            <person name="Fuchs M."/>
            <person name="Duesterhoeft A."/>
            <person name="Fritzc C."/>
            <person name="Holzer E."/>
            <person name="Moestl D."/>
            <person name="Hilbert H."/>
            <person name="Borzym K."/>
            <person name="Langer I."/>
            <person name="Beck A."/>
            <person name="Lehrach H."/>
            <person name="Reinhardt R."/>
            <person name="Pohl T.M."/>
            <person name="Eger P."/>
            <person name="Zimmermann W."/>
            <person name="Wedler H."/>
            <person name="Wambutt R."/>
            <person name="Purnelle B."/>
            <person name="Goffeau A."/>
            <person name="Cadieu E."/>
            <person name="Dreano S."/>
            <person name="Gloux S."/>
            <person name="Lelaure V."/>
            <person name="Mottier S."/>
            <person name="Galibert F."/>
            <person name="Aves S.J."/>
            <person name="Xiang Z."/>
            <person name="Hunt C."/>
            <person name="Moore K."/>
            <person name="Hurst S.M."/>
            <person name="Lucas M."/>
            <person name="Rochet M."/>
            <person name="Gaillardin C."/>
            <person name="Tallada V.A."/>
            <person name="Garzon A."/>
            <person name="Thode G."/>
            <person name="Daga R.R."/>
            <person name="Cruzado L."/>
            <person name="Jimenez J."/>
            <person name="Sanchez M."/>
            <person name="del Rey F."/>
            <person name="Benito J."/>
            <person name="Dominguez A."/>
            <person name="Revuelta J.L."/>
            <person name="Moreno S."/>
            <person name="Armstrong J."/>
            <person name="Forsburg S.L."/>
            <person name="Cerutti L."/>
            <person name="Lowe T."/>
            <person name="McCombie W.R."/>
            <person name="Paulsen I."/>
            <person name="Potashkin J."/>
            <person name="Shpakovski G.V."/>
            <person name="Ussery D."/>
            <person name="Barrell B.G."/>
            <person name="Nurse P."/>
        </authorList>
    </citation>
    <scope>NUCLEOTIDE SEQUENCE [LARGE SCALE GENOMIC DNA]</scope>
    <source>
        <strain>972 / ATCC 24843</strain>
    </source>
</reference>
<reference key="2">
    <citation type="journal article" date="2002" name="Science">
        <title>Regulation of heterochromatic silencing and histone H3 lysine-9 methylation by RNAi.</title>
        <authorList>
            <person name="Volpe T.A."/>
            <person name="Kidner C."/>
            <person name="Hall I.M."/>
            <person name="Teng G."/>
            <person name="Grewal S.I.S."/>
            <person name="Martienssen R.A."/>
        </authorList>
    </citation>
    <scope>FUNCTION</scope>
    <scope>SUBCELLULAR LOCATION</scope>
</reference>
<reference key="3">
    <citation type="journal article" date="2002" name="Science">
        <title>Establishment and maintenance of a heterochromatin domain.</title>
        <authorList>
            <person name="Hall I.M."/>
            <person name="Shankaranarayana G.D."/>
            <person name="Noma K."/>
            <person name="Ayoub N."/>
            <person name="Cohen A."/>
            <person name="Grewal S.I.S."/>
        </authorList>
    </citation>
    <scope>FUNCTION</scope>
</reference>
<reference key="4">
    <citation type="journal article" date="2003" name="Chromosome Res.">
        <title>RNA interference is required for normal centromere function in fission yeast.</title>
        <authorList>
            <person name="Volpe T."/>
            <person name="Schramke V."/>
            <person name="Hamilton G.L."/>
            <person name="White S.A."/>
            <person name="Teng G."/>
            <person name="Martienssen R.A."/>
            <person name="Allshire R.C."/>
        </authorList>
    </citation>
    <scope>FUNCTION</scope>
</reference>
<reference key="5">
    <citation type="journal article" date="2003" name="Proc. Natl. Acad. Sci. U.S.A.">
        <title>RNA interference machinery regulates chromosome dynamics during mitosis and meiosis in fission yeast.</title>
        <authorList>
            <person name="Hall I.M."/>
            <person name="Noma K."/>
            <person name="Grewal S.I.S."/>
        </authorList>
    </citation>
    <scope>FUNCTION</scope>
</reference>
<reference key="6">
    <citation type="journal article" date="2004" name="Cell">
        <title>Two RNAi complexes, RITS and RDRC, physically interact and localize to noncoding centromeric RNAs.</title>
        <authorList>
            <person name="Motamedi M.R."/>
            <person name="Verdel A."/>
            <person name="Colmenares S.U."/>
            <person name="Gerber S.A."/>
            <person name="Gygi S.P."/>
            <person name="Moazed D."/>
        </authorList>
    </citation>
    <scope>FUNCTION</scope>
    <scope>IDENTIFICATION OF THE COMPONENTS OF THE RDRC AND RITS COMPLEXES BY MASS SPECTROMETRY</scope>
    <scope>SUBCELLULAR LOCATION</scope>
</reference>
<reference key="7">
    <citation type="journal article" date="2004" name="Genes Dev.">
        <title>A single Argonaute protein mediates both transcriptional and posttranscriptional silencing in Schizosaccharomyces pombe.</title>
        <authorList>
            <person name="Sigova A."/>
            <person name="Rhind N."/>
            <person name="Zamore P.D."/>
        </authorList>
    </citation>
    <scope>FUNCTION</scope>
</reference>
<reference key="8">
    <citation type="journal article" date="2004" name="Mol. Biol. Cell">
        <title>ago1 and dcr1, two core components of the RNA interference pathway, functionally diverge from rdp1 in regulating cell cycle events in Schizosaccharomyces pombe.</title>
        <authorList>
            <person name="Carmichael J.B."/>
            <person name="Provost P."/>
            <person name="Ekwall K."/>
            <person name="Hobman T.C."/>
        </authorList>
    </citation>
    <scope>FUNCTION</scope>
</reference>
<reference key="9">
    <citation type="journal article" date="2005" name="Proc. Natl. Acad. Sci. U.S.A.">
        <title>RNA-dependent RNA polymerase is an essential component of a self-enforcing loop coupling heterochromatin assembly to siRNA production.</title>
        <authorList>
            <person name="Sugiyama T."/>
            <person name="Cam H."/>
            <person name="Verdel A."/>
            <person name="Moazed D."/>
            <person name="Grewal S.I.S."/>
        </authorList>
    </citation>
    <scope>FUNCTION</scope>
    <scope>POLYMERASE ACTIVITY</scope>
    <scope>SUBCELLULAR LOCATION</scope>
    <scope>MUTAGENESIS OF ASP-903</scope>
</reference>
<accession>O14227</accession>
<feature type="chain" id="PRO_0000097211" description="RNA-dependent RNA polymerase 1">
    <location>
        <begin position="1"/>
        <end position="1215"/>
    </location>
</feature>
<feature type="mutagenesis site" description="Abolishes RNA-dependent RNA polymerase activity and results in loss of transcriptional silencing and heterochromatin formation at centromeres together with defects in mitotic chromosome segregation and telomere clustering." evidence="8">
    <original>D</original>
    <variation>A</variation>
    <location>
        <position position="903"/>
    </location>
</feature>
<evidence type="ECO:0000269" key="1">
    <source>
    </source>
</evidence>
<evidence type="ECO:0000269" key="2">
    <source>
    </source>
</evidence>
<evidence type="ECO:0000269" key="3">
    <source>
    </source>
</evidence>
<evidence type="ECO:0000269" key="4">
    <source>
    </source>
</evidence>
<evidence type="ECO:0000269" key="5">
    <source>
    </source>
</evidence>
<evidence type="ECO:0000269" key="6">
    <source>
    </source>
</evidence>
<evidence type="ECO:0000269" key="7">
    <source>
    </source>
</evidence>
<evidence type="ECO:0000269" key="8">
    <source>
    </source>
</evidence>
<evidence type="ECO:0000305" key="9"/>
<protein>
    <recommendedName>
        <fullName>RNA-dependent RNA polymerase 1</fullName>
        <shortName>Protein rdp1</shortName>
        <ecNumber>2.7.7.48</ecNumber>
    </recommendedName>
</protein>
<gene>
    <name type="primary">rdp1</name>
    <name type="synonym">csp7</name>
    <name type="synonym">rdr1</name>
    <name type="ORF">SPAC6F12.09</name>
</gene>
<name>RDP1_SCHPO</name>
<proteinExistence type="evidence at protein level"/>